<name>CMGA_HORSE</name>
<evidence type="ECO:0000250" key="1"/>
<evidence type="ECO:0000250" key="2">
    <source>
        <dbReference type="UniProtKB" id="P05059"/>
    </source>
</evidence>
<evidence type="ECO:0000250" key="3">
    <source>
        <dbReference type="UniProtKB" id="P10354"/>
    </source>
</evidence>
<evidence type="ECO:0000250" key="4">
    <source>
        <dbReference type="UniProtKB" id="P10645"/>
    </source>
</evidence>
<evidence type="ECO:0000250" key="5">
    <source>
        <dbReference type="UniProtKB" id="P26339"/>
    </source>
</evidence>
<evidence type="ECO:0000255" key="6"/>
<evidence type="ECO:0000256" key="7">
    <source>
        <dbReference type="SAM" id="MobiDB-lite"/>
    </source>
</evidence>
<evidence type="ECO:0000269" key="8">
    <source>
    </source>
</evidence>
<evidence type="ECO:0000305" key="9"/>
<accession>Q9XS63</accession>
<organism>
    <name type="scientific">Equus caballus</name>
    <name type="common">Horse</name>
    <dbReference type="NCBI Taxonomy" id="9796"/>
    <lineage>
        <taxon>Eukaryota</taxon>
        <taxon>Metazoa</taxon>
        <taxon>Chordata</taxon>
        <taxon>Craniata</taxon>
        <taxon>Vertebrata</taxon>
        <taxon>Euteleostomi</taxon>
        <taxon>Mammalia</taxon>
        <taxon>Eutheria</taxon>
        <taxon>Laurasiatheria</taxon>
        <taxon>Perissodactyla</taxon>
        <taxon>Equidae</taxon>
        <taxon>Equus</taxon>
    </lineage>
</organism>
<gene>
    <name type="primary">CHGA</name>
</gene>
<protein>
    <recommendedName>
        <fullName>Chromogranin-A</fullName>
        <shortName>CgA</shortName>
    </recommendedName>
    <component>
        <recommendedName>
            <fullName>Pancreastatin</fullName>
        </recommendedName>
    </component>
    <component>
        <recommendedName>
            <fullName>WE-14</fullName>
        </recommendedName>
    </component>
    <component>
        <recommendedName>
            <fullName>Catestatin</fullName>
        </recommendedName>
    </component>
    <component>
        <recommendedName>
            <fullName>GE-25</fullName>
        </recommendedName>
    </component>
    <component>
        <recommendedName>
            <fullName>Serpinin-RRG</fullName>
        </recommendedName>
    </component>
    <component>
        <recommendedName>
            <fullName>Serpinin</fullName>
        </recommendedName>
    </component>
    <component>
        <recommendedName>
            <fullName>p-Glu serpinin precursor</fullName>
        </recommendedName>
    </component>
</protein>
<keyword id="KW-0027">Amidation</keyword>
<keyword id="KW-0106">Calcium</keyword>
<keyword id="KW-0165">Cleavage on pair of basic residues</keyword>
<keyword id="KW-0968">Cytoplasmic vesicle</keyword>
<keyword id="KW-1015">Disulfide bond</keyword>
<keyword id="KW-0325">Glycoprotein</keyword>
<keyword id="KW-0558">Oxidation</keyword>
<keyword id="KW-0597">Phosphoprotein</keyword>
<keyword id="KW-0654">Proteoglycan</keyword>
<keyword id="KW-1185">Reference proteome</keyword>
<keyword id="KW-0964">Secreted</keyword>
<keyword id="KW-0732">Signal</keyword>
<comment type="function">
    <molecule>Pancreastatin</molecule>
    <text>Strongly inhibits glucose induced insulin release from the pancreas.</text>
</comment>
<comment type="function">
    <molecule>Catestatin</molecule>
    <text evidence="4">Inhibits catecholamine release from chromaffin cells and noradrenergic neurons by acting as a non-competitive nicotinic cholinergic antagonist. Can induce mast cell migration, degranulation and production of cytokines and chemokines.</text>
</comment>
<comment type="function">
    <molecule>Serpinin</molecule>
    <text evidence="5">Regulates granule biogenesis in endocrine cells by up-regulating the transcription of protease nexin 1 (SERPINE2) via a cAMP-PKA-SP1 pathway. This leads to inhibition of granule protein degradation in the Golgi complex which in turn promotes granule formation.</text>
</comment>
<comment type="subunit">
    <text evidence="2 4 5">Self-interacts; self-assembly is promoted in vitro by chondroitin sulfate attachment which occurs at mildly acidic pH conditions (By similarity). Interacts with SCG3 (By similarity). Interacts with ITPR1 in the secretory granules (By similarity).</text>
</comment>
<comment type="subcellular location">
    <molecule>Serpinin</molecule>
    <subcellularLocation>
        <location evidence="5">Secreted</location>
    </subcellularLocation>
    <subcellularLocation>
        <location evidence="5">Cytoplasmic vesicle</location>
        <location evidence="5">Secretory vesicle</location>
    </subcellularLocation>
    <text evidence="5">Pyroglutaminated serpinin localizes to secretory vesicle.</text>
</comment>
<comment type="subcellular location">
    <subcellularLocation>
        <location evidence="3">Cytoplasmic vesicle</location>
        <location evidence="3">Secretory vesicle</location>
    </subcellularLocation>
    <subcellularLocation>
        <location evidence="3">Cytoplasmic vesicle</location>
        <location evidence="3">Secretory vesicle</location>
        <location evidence="3">Neuronal dense core vesicle</location>
    </subcellularLocation>
    <subcellularLocation>
        <location evidence="3">Secreted</location>
    </subcellularLocation>
    <text evidence="3">Associated with the secretory granule membrane through direct interaction to SCG3 that in turn binds to cholesterol-enriched lipid rafts in intragranular conditions. In pituitary gonadotropes, located in large secretory granules.</text>
</comment>
<comment type="tissue specificity">
    <text evidence="8">Highly expressed in adrenal medulla and pituitary gland. Weaker expression detected in cerebrum, cerebellum, spinal cord, liver, thyroid gland, striated muscle, lung, spleen, kidney, parotid gland, and sublingual gland.</text>
</comment>
<comment type="PTM">
    <text evidence="4">O-glycosylated; contains chondroitin sulfate (CS). CS attachment is pH-dependent, being observed at mildly acidic conditions of pH 5 but not at neutral pH, and promotes self-assembly in vitro.</text>
</comment>
<comment type="miscellaneous">
    <text>Binds calcium with a low-affinity.</text>
</comment>
<comment type="similarity">
    <text evidence="9">Belongs to the chromogranin/secretogranin protein family.</text>
</comment>
<dbReference type="EMBL" id="AB025570">
    <property type="protein sequence ID" value="BAA76748.1"/>
    <property type="molecule type" value="mRNA"/>
</dbReference>
<dbReference type="RefSeq" id="NP_001075283.2">
    <property type="nucleotide sequence ID" value="NM_001081814.2"/>
</dbReference>
<dbReference type="SMR" id="Q9XS63"/>
<dbReference type="FunCoup" id="Q9XS63">
    <property type="interactions" value="190"/>
</dbReference>
<dbReference type="STRING" id="9796.ENSECAP00000030274"/>
<dbReference type="PaxDb" id="9796-ENSECAP00000030274"/>
<dbReference type="GeneID" id="100033828"/>
<dbReference type="KEGG" id="ecb:100033828"/>
<dbReference type="CTD" id="1113"/>
<dbReference type="InParanoid" id="Q9XS63"/>
<dbReference type="OrthoDB" id="9948620at2759"/>
<dbReference type="Proteomes" id="UP000002281">
    <property type="component" value="Unplaced"/>
</dbReference>
<dbReference type="GO" id="GO:0042583">
    <property type="term" value="C:chromaffin granule"/>
    <property type="evidence" value="ECO:0000318"/>
    <property type="project" value="GO_Central"/>
</dbReference>
<dbReference type="GO" id="GO:0005615">
    <property type="term" value="C:extracellular space"/>
    <property type="evidence" value="ECO:0000318"/>
    <property type="project" value="GO_Central"/>
</dbReference>
<dbReference type="GO" id="GO:0098992">
    <property type="term" value="C:neuronal dense core vesicle"/>
    <property type="evidence" value="ECO:0000250"/>
    <property type="project" value="UniProtKB"/>
</dbReference>
<dbReference type="GO" id="GO:0030141">
    <property type="term" value="C:secretory granule"/>
    <property type="evidence" value="ECO:0000250"/>
    <property type="project" value="UniProtKB"/>
</dbReference>
<dbReference type="GO" id="GO:0030133">
    <property type="term" value="C:transport vesicle"/>
    <property type="evidence" value="ECO:0007669"/>
    <property type="project" value="UniProtKB-SubCell"/>
</dbReference>
<dbReference type="GO" id="GO:0042742">
    <property type="term" value="P:defense response to bacterium"/>
    <property type="evidence" value="ECO:0000318"/>
    <property type="project" value="GO_Central"/>
</dbReference>
<dbReference type="GO" id="GO:0050829">
    <property type="term" value="P:defense response to Gram-negative bacterium"/>
    <property type="evidence" value="ECO:0000250"/>
    <property type="project" value="UniProtKB"/>
</dbReference>
<dbReference type="GO" id="GO:0050830">
    <property type="term" value="P:defense response to Gram-positive bacterium"/>
    <property type="evidence" value="ECO:0000250"/>
    <property type="project" value="UniProtKB"/>
</dbReference>
<dbReference type="GO" id="GO:0050886">
    <property type="term" value="P:endocrine process"/>
    <property type="evidence" value="ECO:0000303"/>
    <property type="project" value="UniProtKB"/>
</dbReference>
<dbReference type="GO" id="GO:0045576">
    <property type="term" value="P:mast cell activation"/>
    <property type="evidence" value="ECO:0000250"/>
    <property type="project" value="UniProtKB"/>
</dbReference>
<dbReference type="GO" id="GO:0002551">
    <property type="term" value="P:mast cell chemotaxis"/>
    <property type="evidence" value="ECO:0000250"/>
    <property type="project" value="UniProtKB"/>
</dbReference>
<dbReference type="GO" id="GO:0043303">
    <property type="term" value="P:mast cell degranulation"/>
    <property type="evidence" value="ECO:0000250"/>
    <property type="project" value="UniProtKB"/>
</dbReference>
<dbReference type="GO" id="GO:0033604">
    <property type="term" value="P:negative regulation of catecholamine secretion"/>
    <property type="evidence" value="ECO:0000250"/>
    <property type="project" value="UniProtKB"/>
</dbReference>
<dbReference type="GO" id="GO:0046676">
    <property type="term" value="P:negative regulation of insulin secretion"/>
    <property type="evidence" value="ECO:0000318"/>
    <property type="project" value="GO_Central"/>
</dbReference>
<dbReference type="GO" id="GO:2000707">
    <property type="term" value="P:positive regulation of dense core granule biogenesis"/>
    <property type="evidence" value="ECO:0000250"/>
    <property type="project" value="UniProtKB"/>
</dbReference>
<dbReference type="InterPro" id="IPR001819">
    <property type="entry name" value="Chromogranin_AB"/>
</dbReference>
<dbReference type="InterPro" id="IPR018054">
    <property type="entry name" value="Chromogranin_CS"/>
</dbReference>
<dbReference type="InterPro" id="IPR001990">
    <property type="entry name" value="Granin"/>
</dbReference>
<dbReference type="PANTHER" id="PTHR10583">
    <property type="entry name" value="CHROMOGRANIN"/>
    <property type="match status" value="1"/>
</dbReference>
<dbReference type="PANTHER" id="PTHR10583:SF1">
    <property type="entry name" value="CHROMOGRANIN-A"/>
    <property type="match status" value="1"/>
</dbReference>
<dbReference type="Pfam" id="PF01271">
    <property type="entry name" value="Granin"/>
    <property type="match status" value="2"/>
</dbReference>
<dbReference type="PRINTS" id="PR00659">
    <property type="entry name" value="CHROMOGRANIN"/>
</dbReference>
<dbReference type="PROSITE" id="PS00422">
    <property type="entry name" value="GRANINS_1"/>
    <property type="match status" value="1"/>
</dbReference>
<dbReference type="PROSITE" id="PS00423">
    <property type="entry name" value="GRANINS_2"/>
    <property type="match status" value="1"/>
</dbReference>
<feature type="signal peptide" evidence="6">
    <location>
        <begin position="1"/>
        <end position="18"/>
    </location>
</feature>
<feature type="chain" id="PRO_0000005405" description="Chromogranin-A">
    <location>
        <begin position="19"/>
        <end position="448"/>
    </location>
</feature>
<feature type="peptide" id="PRO_0000005406" description="Pancreastatin" evidence="1">
    <location>
        <begin position="260"/>
        <end position="308"/>
    </location>
</feature>
<feature type="peptide" id="PRO_0000005407" description="WE-14" evidence="1">
    <location>
        <begin position="333"/>
        <end position="346"/>
    </location>
</feature>
<feature type="peptide" id="PRO_0000432677" description="Catestatin" evidence="4">
    <location>
        <begin position="361"/>
        <end position="381"/>
    </location>
</feature>
<feature type="peptide" id="PRO_0000432678" description="GE-25" evidence="2">
    <location>
        <begin position="384"/>
        <end position="408"/>
    </location>
</feature>
<feature type="peptide" id="PRO_0000432679" description="Serpinin-RRG" evidence="3">
    <location>
        <begin position="420"/>
        <end position="448"/>
    </location>
</feature>
<feature type="peptide" id="PRO_0000432680" description="Serpinin" evidence="5">
    <location>
        <begin position="420"/>
        <end position="445"/>
    </location>
</feature>
<feature type="peptide" id="PRO_0000432681" description="p-Glu serpinin precursor" evidence="5">
    <location>
        <begin position="423"/>
        <end position="445"/>
    </location>
</feature>
<feature type="region of interest" description="Disordered" evidence="7">
    <location>
        <begin position="116"/>
        <end position="251"/>
    </location>
</feature>
<feature type="region of interest" description="Disordered" evidence="7">
    <location>
        <begin position="263"/>
        <end position="429"/>
    </location>
</feature>
<feature type="compositionally biased region" description="Basic and acidic residues" evidence="7">
    <location>
        <begin position="129"/>
        <end position="139"/>
    </location>
</feature>
<feature type="compositionally biased region" description="Basic and acidic residues" evidence="7">
    <location>
        <begin position="158"/>
        <end position="175"/>
    </location>
</feature>
<feature type="compositionally biased region" description="Basic and acidic residues" evidence="7">
    <location>
        <begin position="205"/>
        <end position="222"/>
    </location>
</feature>
<feature type="compositionally biased region" description="Acidic residues" evidence="7">
    <location>
        <begin position="223"/>
        <end position="238"/>
    </location>
</feature>
<feature type="compositionally biased region" description="Basic and acidic residues" evidence="7">
    <location>
        <begin position="310"/>
        <end position="350"/>
    </location>
</feature>
<feature type="compositionally biased region" description="Basic and acidic residues" evidence="7">
    <location>
        <begin position="405"/>
        <end position="422"/>
    </location>
</feature>
<feature type="modified residue" description="Phosphoserine" evidence="4">
    <location>
        <position position="197"/>
    </location>
</feature>
<feature type="modified residue" description="Phosphoserine" evidence="4">
    <location>
        <position position="258"/>
    </location>
</feature>
<feature type="modified residue" description="Phosphoserine" evidence="4">
    <location>
        <position position="288"/>
    </location>
</feature>
<feature type="modified residue" description="Glycine amide" evidence="1">
    <location>
        <position position="308"/>
    </location>
</feature>
<feature type="modified residue" description="Phosphoserine" evidence="2">
    <location>
        <position position="311"/>
    </location>
</feature>
<feature type="modified residue" description="Phosphoserine" evidence="4">
    <location>
        <position position="324"/>
    </location>
</feature>
<feature type="modified residue" description="Phosphoserine" evidence="3">
    <location>
        <position position="362"/>
    </location>
</feature>
<feature type="modified residue" description="Methionine sulfoxide" evidence="4">
    <location>
        <position position="363"/>
    </location>
</feature>
<feature type="modified residue" description="Phosphoserine" evidence="2">
    <location>
        <position position="389"/>
    </location>
</feature>
<feature type="modified residue" description="Phosphoserine" evidence="2">
    <location>
        <position position="393"/>
    </location>
</feature>
<feature type="modified residue" description="Phosphoserine" evidence="3">
    <location>
        <position position="415"/>
    </location>
</feature>
<feature type="modified residue" description="Phosphoserine" evidence="3">
    <location>
        <position position="429"/>
    </location>
</feature>
<feature type="glycosylation site" description="O-linked (Xyl...) (chondroitin sulfate) serine" evidence="4">
    <location>
        <position position="415"/>
    </location>
</feature>
<feature type="disulfide bond" evidence="1">
    <location>
        <begin position="35"/>
        <end position="56"/>
    </location>
</feature>
<sequence length="448" mass="49861">MRSAVVLALLLCAGQVIALPVNSPMDTGDTEVMKCIVEVISDTLSKPSPVPVSQECFETLRGDERILSILRHQNLLKELQDLALQGAKERAPQQKHSRLEDELAEVLEKQNHQAELKEVTEEALSEDAAEARGDSKEVEENGEDADGARPQAALEPEQESRVEDAQAPGEEKEAINTHSPTRLPSQKHPDPQAEGDSDSPSQGLVDREKGLGAERGQQAKREEEEDEAGEKADAEEEGPTAAFNPHPSLSYKIRKGESWSEALVVDGARKTGAEEAQPPEGQGEREHSRQEEEEEEETAGASRGLFRGGKSRELEQEKEQERLSKEWEDAKRWSKMDQLAKELTAEKRLEGEDEEEDDPDRSMKLSFRARAYGFRGPGLQLRRGWRPSSREDSIEAGLPPPVRGYPEEKKEEEGSANRRPEDQELESLSAIEAELEKVAHQLQALRRG</sequence>
<reference key="1">
    <citation type="journal article" date="2000" name="J. Vet. Med. Sci.">
        <title>Molecular cloning of equine chromogranin A and its expression in endocrine and exocrine tissues.</title>
        <authorList>
            <person name="Sato F."/>
            <person name="Hasegawa T."/>
            <person name="Katayama Y."/>
            <person name="Iwanaga T."/>
            <person name="Yanaihara N."/>
            <person name="Kanno T."/>
            <person name="Ishida N."/>
        </authorList>
    </citation>
    <scope>NUCLEOTIDE SEQUENCE [MRNA]</scope>
    <scope>TISSUE SPECIFICITY</scope>
    <source>
        <tissue>Adrenal medulla</tissue>
    </source>
</reference>
<proteinExistence type="evidence at transcript level"/>